<gene>
    <name evidence="1" type="primary">thrS</name>
    <name type="ordered locus">H16_A1339</name>
</gene>
<reference key="1">
    <citation type="journal article" date="2006" name="Nat. Biotechnol.">
        <title>Genome sequence of the bioplastic-producing 'Knallgas' bacterium Ralstonia eutropha H16.</title>
        <authorList>
            <person name="Pohlmann A."/>
            <person name="Fricke W.F."/>
            <person name="Reinecke F."/>
            <person name="Kusian B."/>
            <person name="Liesegang H."/>
            <person name="Cramm R."/>
            <person name="Eitinger T."/>
            <person name="Ewering C."/>
            <person name="Poetter M."/>
            <person name="Schwartz E."/>
            <person name="Strittmatter A."/>
            <person name="Voss I."/>
            <person name="Gottschalk G."/>
            <person name="Steinbuechel A."/>
            <person name="Friedrich B."/>
            <person name="Bowien B."/>
        </authorList>
    </citation>
    <scope>NUCLEOTIDE SEQUENCE [LARGE SCALE GENOMIC DNA]</scope>
    <source>
        <strain>ATCC 17699 / DSM 428 / KCTC 22496 / NCIMB 10442 / H16 / Stanier 337</strain>
    </source>
</reference>
<sequence>MIAITLPDGSRREFPGPVTVAEVAQGIGAGLAKAALAGKVDGQLVDTSYRIDRDAELAIVTDKDADGVDVIRHSTAHLLAYAVKELYPEAQVTIGPVIENGFYYDFAYKRPFTPEDLAAIEKKMTELARKDEKVVREVWNRDEAVALFESMGEKYKAEIIASIPADQEIGLYREGSFVDLCRGPHVPSTGKLKVFKLMKVAGAYWRGDANNEMLQRIYGTAWARKEDQEAYLHMLEEAEKRDHRKLGKTLDLFHLQEEAPGMVFWHPKGWQVWQAVEQYMRGRLTDAGYDEVRTPQVMDRSLWEKSGHWQNYKENMFVTESEKRDYAIKPMNCPGHVQIFNHGLRSYRDLPLRLAEFGACHRNEPSGALHGLMRVRGFVQDDAHIFCTEEQIVAEAKAFNELAFSVYDDFGFKDVKVKLSLRPDQRAGSDEIWDHAEEGLRLALRACGVDWEELPGEGAFYGPKVEYHIKDAIGRSWQCGTLQLDLVLPERLDAEYVSEDNSRKRPVMLHRAILGSFERFLGILLENHAGALPAWLAPEQVVVMNIADSQAEYAESVVQLLQKQGFRAKADLRNEKITYKIREHSLQKVPYLLVVGDKERDASQVAVRARGNVDLGVMPVSAFVERLKNDVASKA</sequence>
<name>SYT_CUPNH</name>
<dbReference type="EC" id="6.1.1.3" evidence="1"/>
<dbReference type="EMBL" id="AM260479">
    <property type="protein sequence ID" value="CAJ92478.1"/>
    <property type="molecule type" value="Genomic_DNA"/>
</dbReference>
<dbReference type="RefSeq" id="WP_011615007.1">
    <property type="nucleotide sequence ID" value="NC_008313.1"/>
</dbReference>
<dbReference type="SMR" id="Q0KBZ3"/>
<dbReference type="STRING" id="381666.H16_A1339"/>
<dbReference type="KEGG" id="reh:H16_A1339"/>
<dbReference type="PATRIC" id="fig|381666.6.peg.1730"/>
<dbReference type="eggNOG" id="COG0441">
    <property type="taxonomic scope" value="Bacteria"/>
</dbReference>
<dbReference type="HOGENOM" id="CLU_008554_0_1_4"/>
<dbReference type="OrthoDB" id="9802304at2"/>
<dbReference type="Proteomes" id="UP000008210">
    <property type="component" value="Chromosome 1"/>
</dbReference>
<dbReference type="GO" id="GO:0005829">
    <property type="term" value="C:cytosol"/>
    <property type="evidence" value="ECO:0007669"/>
    <property type="project" value="TreeGrafter"/>
</dbReference>
<dbReference type="GO" id="GO:0005524">
    <property type="term" value="F:ATP binding"/>
    <property type="evidence" value="ECO:0007669"/>
    <property type="project" value="UniProtKB-UniRule"/>
</dbReference>
<dbReference type="GO" id="GO:0046872">
    <property type="term" value="F:metal ion binding"/>
    <property type="evidence" value="ECO:0007669"/>
    <property type="project" value="UniProtKB-KW"/>
</dbReference>
<dbReference type="GO" id="GO:0004829">
    <property type="term" value="F:threonine-tRNA ligase activity"/>
    <property type="evidence" value="ECO:0007669"/>
    <property type="project" value="UniProtKB-UniRule"/>
</dbReference>
<dbReference type="GO" id="GO:0000049">
    <property type="term" value="F:tRNA binding"/>
    <property type="evidence" value="ECO:0007669"/>
    <property type="project" value="UniProtKB-KW"/>
</dbReference>
<dbReference type="GO" id="GO:0006435">
    <property type="term" value="P:threonyl-tRNA aminoacylation"/>
    <property type="evidence" value="ECO:0007669"/>
    <property type="project" value="UniProtKB-UniRule"/>
</dbReference>
<dbReference type="CDD" id="cd01667">
    <property type="entry name" value="TGS_ThrRS"/>
    <property type="match status" value="1"/>
</dbReference>
<dbReference type="CDD" id="cd00860">
    <property type="entry name" value="ThrRS_anticodon"/>
    <property type="match status" value="1"/>
</dbReference>
<dbReference type="CDD" id="cd00771">
    <property type="entry name" value="ThrRS_core"/>
    <property type="match status" value="1"/>
</dbReference>
<dbReference type="FunFam" id="3.10.20.30:FF:000005">
    <property type="entry name" value="Threonine--tRNA ligase"/>
    <property type="match status" value="1"/>
</dbReference>
<dbReference type="FunFam" id="3.30.54.20:FF:000002">
    <property type="entry name" value="Threonine--tRNA ligase"/>
    <property type="match status" value="1"/>
</dbReference>
<dbReference type="FunFam" id="3.30.930.10:FF:000002">
    <property type="entry name" value="Threonine--tRNA ligase"/>
    <property type="match status" value="1"/>
</dbReference>
<dbReference type="FunFam" id="3.40.50.800:FF:000001">
    <property type="entry name" value="Threonine--tRNA ligase"/>
    <property type="match status" value="1"/>
</dbReference>
<dbReference type="FunFam" id="3.30.980.10:FF:000005">
    <property type="entry name" value="Threonyl-tRNA synthetase, mitochondrial"/>
    <property type="match status" value="1"/>
</dbReference>
<dbReference type="Gene3D" id="3.10.20.30">
    <property type="match status" value="1"/>
</dbReference>
<dbReference type="Gene3D" id="3.30.54.20">
    <property type="match status" value="1"/>
</dbReference>
<dbReference type="Gene3D" id="3.40.50.800">
    <property type="entry name" value="Anticodon-binding domain"/>
    <property type="match status" value="1"/>
</dbReference>
<dbReference type="Gene3D" id="3.30.930.10">
    <property type="entry name" value="Bira Bifunctional Protein, Domain 2"/>
    <property type="match status" value="1"/>
</dbReference>
<dbReference type="Gene3D" id="3.30.980.10">
    <property type="entry name" value="Threonyl-trna Synthetase, Chain A, domain 2"/>
    <property type="match status" value="1"/>
</dbReference>
<dbReference type="HAMAP" id="MF_00184">
    <property type="entry name" value="Thr_tRNA_synth"/>
    <property type="match status" value="1"/>
</dbReference>
<dbReference type="InterPro" id="IPR002314">
    <property type="entry name" value="aa-tRNA-synt_IIb"/>
</dbReference>
<dbReference type="InterPro" id="IPR006195">
    <property type="entry name" value="aa-tRNA-synth_II"/>
</dbReference>
<dbReference type="InterPro" id="IPR045864">
    <property type="entry name" value="aa-tRNA-synth_II/BPL/LPL"/>
</dbReference>
<dbReference type="InterPro" id="IPR004154">
    <property type="entry name" value="Anticodon-bd"/>
</dbReference>
<dbReference type="InterPro" id="IPR036621">
    <property type="entry name" value="Anticodon-bd_dom_sf"/>
</dbReference>
<dbReference type="InterPro" id="IPR012675">
    <property type="entry name" value="Beta-grasp_dom_sf"/>
</dbReference>
<dbReference type="InterPro" id="IPR004095">
    <property type="entry name" value="TGS"/>
</dbReference>
<dbReference type="InterPro" id="IPR012676">
    <property type="entry name" value="TGS-like"/>
</dbReference>
<dbReference type="InterPro" id="IPR002320">
    <property type="entry name" value="Thr-tRNA-ligase_IIa"/>
</dbReference>
<dbReference type="InterPro" id="IPR018163">
    <property type="entry name" value="Thr/Ala-tRNA-synth_IIc_edit"/>
</dbReference>
<dbReference type="InterPro" id="IPR047246">
    <property type="entry name" value="ThrRS_anticodon"/>
</dbReference>
<dbReference type="InterPro" id="IPR033728">
    <property type="entry name" value="ThrRS_core"/>
</dbReference>
<dbReference type="InterPro" id="IPR012947">
    <property type="entry name" value="tRNA_SAD"/>
</dbReference>
<dbReference type="NCBIfam" id="TIGR00418">
    <property type="entry name" value="thrS"/>
    <property type="match status" value="1"/>
</dbReference>
<dbReference type="PANTHER" id="PTHR11451:SF44">
    <property type="entry name" value="THREONINE--TRNA LIGASE, CHLOROPLASTIC_MITOCHONDRIAL 2"/>
    <property type="match status" value="1"/>
</dbReference>
<dbReference type="PANTHER" id="PTHR11451">
    <property type="entry name" value="THREONINE-TRNA LIGASE"/>
    <property type="match status" value="1"/>
</dbReference>
<dbReference type="Pfam" id="PF03129">
    <property type="entry name" value="HGTP_anticodon"/>
    <property type="match status" value="1"/>
</dbReference>
<dbReference type="Pfam" id="PF02824">
    <property type="entry name" value="TGS"/>
    <property type="match status" value="1"/>
</dbReference>
<dbReference type="Pfam" id="PF00587">
    <property type="entry name" value="tRNA-synt_2b"/>
    <property type="match status" value="1"/>
</dbReference>
<dbReference type="Pfam" id="PF07973">
    <property type="entry name" value="tRNA_SAD"/>
    <property type="match status" value="1"/>
</dbReference>
<dbReference type="PRINTS" id="PR01047">
    <property type="entry name" value="TRNASYNTHTHR"/>
</dbReference>
<dbReference type="SMART" id="SM00863">
    <property type="entry name" value="tRNA_SAD"/>
    <property type="match status" value="1"/>
</dbReference>
<dbReference type="SUPFAM" id="SSF52954">
    <property type="entry name" value="Class II aaRS ABD-related"/>
    <property type="match status" value="1"/>
</dbReference>
<dbReference type="SUPFAM" id="SSF55681">
    <property type="entry name" value="Class II aaRS and biotin synthetases"/>
    <property type="match status" value="1"/>
</dbReference>
<dbReference type="SUPFAM" id="SSF81271">
    <property type="entry name" value="TGS-like"/>
    <property type="match status" value="1"/>
</dbReference>
<dbReference type="SUPFAM" id="SSF55186">
    <property type="entry name" value="ThrRS/AlaRS common domain"/>
    <property type="match status" value="1"/>
</dbReference>
<dbReference type="PROSITE" id="PS50862">
    <property type="entry name" value="AA_TRNA_LIGASE_II"/>
    <property type="match status" value="1"/>
</dbReference>
<dbReference type="PROSITE" id="PS51880">
    <property type="entry name" value="TGS"/>
    <property type="match status" value="1"/>
</dbReference>
<feature type="chain" id="PRO_1000020484" description="Threonine--tRNA ligase">
    <location>
        <begin position="1"/>
        <end position="635"/>
    </location>
</feature>
<feature type="domain" description="TGS" evidence="2">
    <location>
        <begin position="1"/>
        <end position="61"/>
    </location>
</feature>
<feature type="region of interest" description="Catalytic" evidence="1">
    <location>
        <begin position="242"/>
        <end position="533"/>
    </location>
</feature>
<feature type="binding site" evidence="1">
    <location>
        <position position="333"/>
    </location>
    <ligand>
        <name>Zn(2+)</name>
        <dbReference type="ChEBI" id="CHEBI:29105"/>
    </ligand>
</feature>
<feature type="binding site" evidence="1">
    <location>
        <position position="384"/>
    </location>
    <ligand>
        <name>Zn(2+)</name>
        <dbReference type="ChEBI" id="CHEBI:29105"/>
    </ligand>
</feature>
<feature type="binding site" evidence="1">
    <location>
        <position position="510"/>
    </location>
    <ligand>
        <name>Zn(2+)</name>
        <dbReference type="ChEBI" id="CHEBI:29105"/>
    </ligand>
</feature>
<keyword id="KW-0030">Aminoacyl-tRNA synthetase</keyword>
<keyword id="KW-0067">ATP-binding</keyword>
<keyword id="KW-0963">Cytoplasm</keyword>
<keyword id="KW-0436">Ligase</keyword>
<keyword id="KW-0479">Metal-binding</keyword>
<keyword id="KW-0547">Nucleotide-binding</keyword>
<keyword id="KW-0648">Protein biosynthesis</keyword>
<keyword id="KW-1185">Reference proteome</keyword>
<keyword id="KW-0694">RNA-binding</keyword>
<keyword id="KW-0820">tRNA-binding</keyword>
<keyword id="KW-0862">Zinc</keyword>
<proteinExistence type="inferred from homology"/>
<organism>
    <name type="scientific">Cupriavidus necator (strain ATCC 17699 / DSM 428 / KCTC 22496 / NCIMB 10442 / H16 / Stanier 337)</name>
    <name type="common">Ralstonia eutropha</name>
    <dbReference type="NCBI Taxonomy" id="381666"/>
    <lineage>
        <taxon>Bacteria</taxon>
        <taxon>Pseudomonadati</taxon>
        <taxon>Pseudomonadota</taxon>
        <taxon>Betaproteobacteria</taxon>
        <taxon>Burkholderiales</taxon>
        <taxon>Burkholderiaceae</taxon>
        <taxon>Cupriavidus</taxon>
    </lineage>
</organism>
<protein>
    <recommendedName>
        <fullName evidence="1">Threonine--tRNA ligase</fullName>
        <ecNumber evidence="1">6.1.1.3</ecNumber>
    </recommendedName>
    <alternativeName>
        <fullName evidence="1">Threonyl-tRNA synthetase</fullName>
        <shortName evidence="1">ThrRS</shortName>
    </alternativeName>
</protein>
<comment type="function">
    <text evidence="1">Catalyzes the attachment of threonine to tRNA(Thr) in a two-step reaction: L-threonine is first activated by ATP to form Thr-AMP and then transferred to the acceptor end of tRNA(Thr). Also edits incorrectly charged L-seryl-tRNA(Thr).</text>
</comment>
<comment type="catalytic activity">
    <reaction evidence="1">
        <text>tRNA(Thr) + L-threonine + ATP = L-threonyl-tRNA(Thr) + AMP + diphosphate + H(+)</text>
        <dbReference type="Rhea" id="RHEA:24624"/>
        <dbReference type="Rhea" id="RHEA-COMP:9670"/>
        <dbReference type="Rhea" id="RHEA-COMP:9704"/>
        <dbReference type="ChEBI" id="CHEBI:15378"/>
        <dbReference type="ChEBI" id="CHEBI:30616"/>
        <dbReference type="ChEBI" id="CHEBI:33019"/>
        <dbReference type="ChEBI" id="CHEBI:57926"/>
        <dbReference type="ChEBI" id="CHEBI:78442"/>
        <dbReference type="ChEBI" id="CHEBI:78534"/>
        <dbReference type="ChEBI" id="CHEBI:456215"/>
        <dbReference type="EC" id="6.1.1.3"/>
    </reaction>
</comment>
<comment type="cofactor">
    <cofactor evidence="1">
        <name>Zn(2+)</name>
        <dbReference type="ChEBI" id="CHEBI:29105"/>
    </cofactor>
    <text evidence="1">Binds 1 zinc ion per subunit.</text>
</comment>
<comment type="subunit">
    <text evidence="1">Homodimer.</text>
</comment>
<comment type="subcellular location">
    <subcellularLocation>
        <location evidence="1">Cytoplasm</location>
    </subcellularLocation>
</comment>
<comment type="similarity">
    <text evidence="1">Belongs to the class-II aminoacyl-tRNA synthetase family.</text>
</comment>
<accession>Q0KBZ3</accession>
<evidence type="ECO:0000255" key="1">
    <source>
        <dbReference type="HAMAP-Rule" id="MF_00184"/>
    </source>
</evidence>
<evidence type="ECO:0000255" key="2">
    <source>
        <dbReference type="PROSITE-ProRule" id="PRU01228"/>
    </source>
</evidence>